<feature type="chain" id="PRO_1000083430" description="Urease subunit gamma">
    <location>
        <begin position="1"/>
        <end position="100"/>
    </location>
</feature>
<comment type="catalytic activity">
    <reaction evidence="1">
        <text>urea + 2 H2O + H(+) = hydrogencarbonate + 2 NH4(+)</text>
        <dbReference type="Rhea" id="RHEA:20557"/>
        <dbReference type="ChEBI" id="CHEBI:15377"/>
        <dbReference type="ChEBI" id="CHEBI:15378"/>
        <dbReference type="ChEBI" id="CHEBI:16199"/>
        <dbReference type="ChEBI" id="CHEBI:17544"/>
        <dbReference type="ChEBI" id="CHEBI:28938"/>
        <dbReference type="EC" id="3.5.1.5"/>
    </reaction>
</comment>
<comment type="pathway">
    <text evidence="1">Nitrogen metabolism; urea degradation; CO(2) and NH(3) from urea (urease route): step 1/1.</text>
</comment>
<comment type="subunit">
    <text evidence="1">Heterotrimer of UreA (gamma), UreB (beta) and UreC (alpha) subunits. Three heterotrimers associate to form the active enzyme.</text>
</comment>
<comment type="subcellular location">
    <subcellularLocation>
        <location evidence="1">Cytoplasm</location>
    </subcellularLocation>
</comment>
<comment type="similarity">
    <text evidence="1">Belongs to the urease gamma subunit family.</text>
</comment>
<name>URE3_STAA9</name>
<organism>
    <name type="scientific">Staphylococcus aureus (strain JH9)</name>
    <dbReference type="NCBI Taxonomy" id="359786"/>
    <lineage>
        <taxon>Bacteria</taxon>
        <taxon>Bacillati</taxon>
        <taxon>Bacillota</taxon>
        <taxon>Bacilli</taxon>
        <taxon>Bacillales</taxon>
        <taxon>Staphylococcaceae</taxon>
        <taxon>Staphylococcus</taxon>
    </lineage>
</organism>
<gene>
    <name evidence="1" type="primary">ureA</name>
    <name type="ordered locus">SaurJH9_2312</name>
</gene>
<keyword id="KW-0963">Cytoplasm</keyword>
<keyword id="KW-0378">Hydrolase</keyword>
<proteinExistence type="inferred from homology"/>
<reference key="1">
    <citation type="submission" date="2007-05" db="EMBL/GenBank/DDBJ databases">
        <title>Complete sequence of chromosome of Staphylococcus aureus subsp. aureus JH9.</title>
        <authorList>
            <consortium name="US DOE Joint Genome Institute"/>
            <person name="Copeland A."/>
            <person name="Lucas S."/>
            <person name="Lapidus A."/>
            <person name="Barry K."/>
            <person name="Detter J.C."/>
            <person name="Glavina del Rio T."/>
            <person name="Hammon N."/>
            <person name="Israni S."/>
            <person name="Pitluck S."/>
            <person name="Chain P."/>
            <person name="Malfatti S."/>
            <person name="Shin M."/>
            <person name="Vergez L."/>
            <person name="Schmutz J."/>
            <person name="Larimer F."/>
            <person name="Land M."/>
            <person name="Hauser L."/>
            <person name="Kyrpides N."/>
            <person name="Kim E."/>
            <person name="Tomasz A."/>
            <person name="Richardson P."/>
        </authorList>
    </citation>
    <scope>NUCLEOTIDE SEQUENCE [LARGE SCALE GENOMIC DNA]</scope>
    <source>
        <strain>JH9</strain>
    </source>
</reference>
<evidence type="ECO:0000255" key="1">
    <source>
        <dbReference type="HAMAP-Rule" id="MF_00739"/>
    </source>
</evidence>
<protein>
    <recommendedName>
        <fullName evidence="1">Urease subunit gamma</fullName>
        <ecNumber evidence="1">3.5.1.5</ecNumber>
    </recommendedName>
    <alternativeName>
        <fullName evidence="1">Urea amidohydrolase subunit gamma</fullName>
    </alternativeName>
</protein>
<accession>A5IV69</accession>
<dbReference type="EC" id="3.5.1.5" evidence="1"/>
<dbReference type="EMBL" id="CP000703">
    <property type="protein sequence ID" value="ABQ50092.1"/>
    <property type="molecule type" value="Genomic_DNA"/>
</dbReference>
<dbReference type="RefSeq" id="WP_000545928.1">
    <property type="nucleotide sequence ID" value="NC_009487.1"/>
</dbReference>
<dbReference type="SMR" id="A5IV69"/>
<dbReference type="KEGG" id="saj:SaurJH9_2312"/>
<dbReference type="HOGENOM" id="CLU_145825_1_0_9"/>
<dbReference type="UniPathway" id="UPA00258">
    <property type="reaction ID" value="UER00370"/>
</dbReference>
<dbReference type="GO" id="GO:0005737">
    <property type="term" value="C:cytoplasm"/>
    <property type="evidence" value="ECO:0007669"/>
    <property type="project" value="UniProtKB-SubCell"/>
</dbReference>
<dbReference type="GO" id="GO:0016151">
    <property type="term" value="F:nickel cation binding"/>
    <property type="evidence" value="ECO:0007669"/>
    <property type="project" value="InterPro"/>
</dbReference>
<dbReference type="GO" id="GO:0009039">
    <property type="term" value="F:urease activity"/>
    <property type="evidence" value="ECO:0007669"/>
    <property type="project" value="UniProtKB-UniRule"/>
</dbReference>
<dbReference type="GO" id="GO:0043419">
    <property type="term" value="P:urea catabolic process"/>
    <property type="evidence" value="ECO:0007669"/>
    <property type="project" value="UniProtKB-UniRule"/>
</dbReference>
<dbReference type="CDD" id="cd00390">
    <property type="entry name" value="Urease_gamma"/>
    <property type="match status" value="1"/>
</dbReference>
<dbReference type="Gene3D" id="3.30.280.10">
    <property type="entry name" value="Urease, gamma-like subunit"/>
    <property type="match status" value="1"/>
</dbReference>
<dbReference type="HAMAP" id="MF_00739">
    <property type="entry name" value="Urease_gamma"/>
    <property type="match status" value="1"/>
</dbReference>
<dbReference type="InterPro" id="IPR012010">
    <property type="entry name" value="Urease_gamma"/>
</dbReference>
<dbReference type="InterPro" id="IPR002026">
    <property type="entry name" value="Urease_gamma/gamma-beta_su"/>
</dbReference>
<dbReference type="InterPro" id="IPR036463">
    <property type="entry name" value="Urease_gamma_sf"/>
</dbReference>
<dbReference type="InterPro" id="IPR050069">
    <property type="entry name" value="Urease_subunit"/>
</dbReference>
<dbReference type="NCBIfam" id="NF009712">
    <property type="entry name" value="PRK13241.1"/>
    <property type="match status" value="1"/>
</dbReference>
<dbReference type="NCBIfam" id="TIGR00193">
    <property type="entry name" value="urease_gam"/>
    <property type="match status" value="1"/>
</dbReference>
<dbReference type="PANTHER" id="PTHR33569">
    <property type="entry name" value="UREASE"/>
    <property type="match status" value="1"/>
</dbReference>
<dbReference type="PANTHER" id="PTHR33569:SF1">
    <property type="entry name" value="UREASE"/>
    <property type="match status" value="1"/>
</dbReference>
<dbReference type="Pfam" id="PF00547">
    <property type="entry name" value="Urease_gamma"/>
    <property type="match status" value="1"/>
</dbReference>
<dbReference type="PIRSF" id="PIRSF001223">
    <property type="entry name" value="Urease_gamma"/>
    <property type="match status" value="1"/>
</dbReference>
<dbReference type="SUPFAM" id="SSF54111">
    <property type="entry name" value="Urease, gamma-subunit"/>
    <property type="match status" value="1"/>
</dbReference>
<sequence>MHFTQREQDKLMIVVAAEVARRRKARGLKLNHPEALALISDELLEGARDGKTVAELMSYGRQILNKEDVMDGVEHMITDIEIEATFPDGTKLITVHHPIV</sequence>